<reference key="1">
    <citation type="submission" date="2003-01" db="EMBL/GenBank/DDBJ databases">
        <authorList>
            <consortium name="NIH - Xenopus Gene Collection (XGC) project"/>
        </authorList>
    </citation>
    <scope>NUCLEOTIDE SEQUENCE [LARGE SCALE MRNA]</scope>
    <source>
        <tissue>Embryo</tissue>
    </source>
</reference>
<reference key="2">
    <citation type="journal article" date="2010" name="Science">
        <title>Greatwall phosphorylates an inhibitor of protein phosphatase 2A that is essential for mitosis.</title>
        <authorList>
            <person name="Mochida S."/>
            <person name="Maslen S.L."/>
            <person name="Skehel M."/>
            <person name="Hunt T."/>
        </authorList>
    </citation>
    <scope>FUNCTION</scope>
    <scope>INTERACTION WITH PPP2R2D</scope>
    <scope>PHOSPHORYLATION AT THR-28; SER-67; THR-99 AND SER-109</scope>
    <scope>MUTAGENESIS OF SER-67</scope>
</reference>
<reference key="3">
    <citation type="journal article" date="2010" name="Science">
        <title>The substrate of Greatwall kinase, Arpp19, controls mitosis by inhibiting protein phosphatase 2A.</title>
        <authorList>
            <person name="Gharbi-Ayachi A."/>
            <person name="Labbe J.C."/>
            <person name="Burgess A."/>
            <person name="Vigneron S."/>
            <person name="Strub J.M."/>
            <person name="Brioudes E."/>
            <person name="Van-Dorsselaer A."/>
            <person name="Castro A."/>
            <person name="Lorca T."/>
        </authorList>
    </citation>
    <scope>FUNCTION</scope>
    <scope>INTERACTION WITH PPP2R2D</scope>
    <scope>PHOSPHORYLATION AT SER-67</scope>
    <scope>MUTAGENESIS OF SER-67</scope>
</reference>
<comment type="function">
    <text evidence="3 4">Protein phosphatase inhibitor that specifically inhibits protein phosphatase 2A (PP2A) during mitosis. When phosphorylated at Ser-67 during mitosis, specifically interacts with ppp2r2d (PR55-delta) and inhibits its activity, leading to inactivation of PP2A, an essential condition to keep cyclin-B1-CDK1 activity high during M phase.</text>
</comment>
<comment type="subunit">
    <text evidence="3 4">Interacts (when phosphorylated at Ser-67) with ppp2r2d.</text>
</comment>
<comment type="subcellular location">
    <subcellularLocation>
        <location evidence="1">Cytoplasm</location>
    </subcellularLocation>
</comment>
<comment type="PTM">
    <text evidence="3 4">Phosphorylation at Ser-67 by gwl during mitosis is essential for interaction with PPP2R2D (PR55-delta) and subsequent inactivation of PP2A. Phosphorylated by PKA.</text>
</comment>
<comment type="similarity">
    <text evidence="5">Belongs to the endosulfine family.</text>
</comment>
<name>ENSA_XENLA</name>
<dbReference type="EMBL" id="BC044986">
    <property type="protein sequence ID" value="AAH44986.1"/>
    <property type="molecule type" value="mRNA"/>
</dbReference>
<dbReference type="RefSeq" id="NP_001080074.1">
    <property type="nucleotide sequence ID" value="NM_001086605.1"/>
</dbReference>
<dbReference type="SMR" id="Q7ZXH9"/>
<dbReference type="BioGRID" id="98008">
    <property type="interactions" value="1"/>
</dbReference>
<dbReference type="iPTMnet" id="Q7ZXH9"/>
<dbReference type="DNASU" id="379766"/>
<dbReference type="GeneID" id="379766"/>
<dbReference type="KEGG" id="xla:379766"/>
<dbReference type="AGR" id="Xenbase:XB-GENE-6077899"/>
<dbReference type="CTD" id="379766"/>
<dbReference type="Xenbase" id="XB-GENE-6077899">
    <property type="gene designation" value="ensa.S"/>
</dbReference>
<dbReference type="OMA" id="FLCVDEM"/>
<dbReference type="OrthoDB" id="5949865at2759"/>
<dbReference type="Proteomes" id="UP000186698">
    <property type="component" value="Chromosome 8S"/>
</dbReference>
<dbReference type="Bgee" id="379766">
    <property type="expression patterns" value="Expressed in camera-type eye and 19 other cell types or tissues"/>
</dbReference>
<dbReference type="GO" id="GO:0005737">
    <property type="term" value="C:cytoplasm"/>
    <property type="evidence" value="ECO:0007669"/>
    <property type="project" value="UniProtKB-SubCell"/>
</dbReference>
<dbReference type="GO" id="GO:0005654">
    <property type="term" value="C:nucleoplasm"/>
    <property type="evidence" value="ECO:0000304"/>
    <property type="project" value="Reactome"/>
</dbReference>
<dbReference type="GO" id="GO:0019212">
    <property type="term" value="F:phosphatase inhibitor activity"/>
    <property type="evidence" value="ECO:0000314"/>
    <property type="project" value="UniProtKB"/>
</dbReference>
<dbReference type="GO" id="GO:0019901">
    <property type="term" value="F:protein kinase binding"/>
    <property type="evidence" value="ECO:0000353"/>
    <property type="project" value="UniProtKB"/>
</dbReference>
<dbReference type="GO" id="GO:0051721">
    <property type="term" value="F:protein phosphatase 2A binding"/>
    <property type="evidence" value="ECO:0000314"/>
    <property type="project" value="UniProtKB"/>
</dbReference>
<dbReference type="GO" id="GO:0004864">
    <property type="term" value="F:protein phosphatase inhibitor activity"/>
    <property type="evidence" value="ECO:0007669"/>
    <property type="project" value="UniProtKB-KW"/>
</dbReference>
<dbReference type="GO" id="GO:0019888">
    <property type="term" value="F:protein phosphatase regulator activity"/>
    <property type="evidence" value="ECO:0000314"/>
    <property type="project" value="UniProtKB"/>
</dbReference>
<dbReference type="GO" id="GO:0051301">
    <property type="term" value="P:cell division"/>
    <property type="evidence" value="ECO:0007669"/>
    <property type="project" value="UniProtKB-KW"/>
</dbReference>
<dbReference type="GO" id="GO:0000086">
    <property type="term" value="P:G2/M transition of mitotic cell cycle"/>
    <property type="evidence" value="ECO:0000314"/>
    <property type="project" value="UniProtKB"/>
</dbReference>
<dbReference type="GO" id="GO:0000278">
    <property type="term" value="P:mitotic cell cycle"/>
    <property type="evidence" value="ECO:0000314"/>
    <property type="project" value="UniProtKB"/>
</dbReference>
<dbReference type="InterPro" id="IPR006760">
    <property type="entry name" value="Endosulphine"/>
</dbReference>
<dbReference type="PANTHER" id="PTHR10358:SF21">
    <property type="entry name" value="ALPHA-ENDOSULFINE"/>
    <property type="match status" value="1"/>
</dbReference>
<dbReference type="PANTHER" id="PTHR10358">
    <property type="entry name" value="ENDOSULFINE"/>
    <property type="match status" value="1"/>
</dbReference>
<dbReference type="Pfam" id="PF04667">
    <property type="entry name" value="Endosulfine"/>
    <property type="match status" value="1"/>
</dbReference>
<protein>
    <recommendedName>
        <fullName>Alpha-endosulfine</fullName>
    </recommendedName>
</protein>
<evidence type="ECO:0000250" key="1"/>
<evidence type="ECO:0000256" key="2">
    <source>
        <dbReference type="SAM" id="MobiDB-lite"/>
    </source>
</evidence>
<evidence type="ECO:0000269" key="3">
    <source>
    </source>
</evidence>
<evidence type="ECO:0000269" key="4">
    <source>
    </source>
</evidence>
<evidence type="ECO:0000305" key="5"/>
<gene>
    <name type="primary">ensa</name>
</gene>
<feature type="chain" id="PRO_0000371566" description="Alpha-endosulfine">
    <location>
        <begin position="1"/>
        <end position="125"/>
    </location>
</feature>
<feature type="region of interest" description="Disordered" evidence="2">
    <location>
        <begin position="1"/>
        <end position="52"/>
    </location>
</feature>
<feature type="region of interest" description="Disordered" evidence="2">
    <location>
        <begin position="86"/>
        <end position="107"/>
    </location>
</feature>
<feature type="compositionally biased region" description="Basic and acidic residues" evidence="2">
    <location>
        <begin position="1"/>
        <end position="37"/>
    </location>
</feature>
<feature type="modified residue" description="Phosphothreonine; by CDK2" evidence="3">
    <location>
        <position position="28"/>
    </location>
</feature>
<feature type="modified residue" description="Phosphoserine; by GWL" evidence="3 4">
    <location>
        <position position="67"/>
    </location>
</feature>
<feature type="modified residue" description="Phosphothreonine; by CDK2" evidence="3">
    <location>
        <position position="99"/>
    </location>
</feature>
<feature type="modified residue" description="Phosphoserine; by PKA" evidence="3">
    <location>
        <position position="109"/>
    </location>
</feature>
<feature type="mutagenesis site" description="Abolishes phosphorylation by GWL and ability to regulate mitosis." evidence="3 4">
    <original>S</original>
    <variation>A</variation>
    <location>
        <position position="67"/>
    </location>
</feature>
<organism>
    <name type="scientific">Xenopus laevis</name>
    <name type="common">African clawed frog</name>
    <dbReference type="NCBI Taxonomy" id="8355"/>
    <lineage>
        <taxon>Eukaryota</taxon>
        <taxon>Metazoa</taxon>
        <taxon>Chordata</taxon>
        <taxon>Craniata</taxon>
        <taxon>Vertebrata</taxon>
        <taxon>Euteleostomi</taxon>
        <taxon>Amphibia</taxon>
        <taxon>Batrachia</taxon>
        <taxon>Anura</taxon>
        <taxon>Pipoidea</taxon>
        <taxon>Pipidae</taxon>
        <taxon>Xenopodinae</taxon>
        <taxon>Xenopus</taxon>
        <taxon>Xenopus</taxon>
    </lineage>
</organism>
<keyword id="KW-0131">Cell cycle</keyword>
<keyword id="KW-0132">Cell division</keyword>
<keyword id="KW-0963">Cytoplasm</keyword>
<keyword id="KW-0498">Mitosis</keyword>
<keyword id="KW-0597">Phosphoprotein</keyword>
<keyword id="KW-0650">Protein phosphatase inhibitor</keyword>
<keyword id="KW-1185">Reference proteome</keyword>
<proteinExistence type="evidence at protein level"/>
<accession>Q7ZXH9</accession>
<sequence>MSDKYIGDSHLEETGEEKQDSQEKEAVTPEKAEEQKLKAKYPNLGQKPGGSDFLMKRLQKGQKYFDSGDYNMAKAKIKNKQLPCAGPDKNLVTGDHIPTPQDLPQRKSSLVTSKLAGHVEDLHHV</sequence>